<keyword id="KW-0150">Chloroplast</keyword>
<keyword id="KW-0472">Membrane</keyword>
<keyword id="KW-0520">NAD</keyword>
<keyword id="KW-0521">NADP</keyword>
<keyword id="KW-0934">Plastid</keyword>
<keyword id="KW-0618">Plastoquinone</keyword>
<keyword id="KW-0874">Quinone</keyword>
<keyword id="KW-0793">Thylakoid</keyword>
<keyword id="KW-1278">Translocase</keyword>
<keyword id="KW-0812">Transmembrane</keyword>
<keyword id="KW-1133">Transmembrane helix</keyword>
<keyword id="KW-0813">Transport</keyword>
<proteinExistence type="inferred from homology"/>
<geneLocation type="chloroplast"/>
<feature type="chain" id="PRO_0000360961" description="NAD(P)H-quinone oxidoreductase subunit 5, chloroplastic">
    <location>
        <begin position="1"/>
        <end position="746"/>
    </location>
</feature>
<feature type="transmembrane region" description="Helical" evidence="2">
    <location>
        <begin position="9"/>
        <end position="29"/>
    </location>
</feature>
<feature type="transmembrane region" description="Helical" evidence="2">
    <location>
        <begin position="40"/>
        <end position="60"/>
    </location>
</feature>
<feature type="transmembrane region" description="Helical" evidence="2">
    <location>
        <begin position="89"/>
        <end position="109"/>
    </location>
</feature>
<feature type="transmembrane region" description="Helical" evidence="2">
    <location>
        <begin position="125"/>
        <end position="145"/>
    </location>
</feature>
<feature type="transmembrane region" description="Helical" evidence="2">
    <location>
        <begin position="147"/>
        <end position="167"/>
    </location>
</feature>
<feature type="transmembrane region" description="Helical" evidence="2">
    <location>
        <begin position="185"/>
        <end position="205"/>
    </location>
</feature>
<feature type="transmembrane region" description="Helical" evidence="2">
    <location>
        <begin position="221"/>
        <end position="241"/>
    </location>
</feature>
<feature type="transmembrane region" description="Helical" evidence="2">
    <location>
        <begin position="258"/>
        <end position="278"/>
    </location>
</feature>
<feature type="transmembrane region" description="Helical" evidence="2">
    <location>
        <begin position="280"/>
        <end position="300"/>
    </location>
</feature>
<feature type="transmembrane region" description="Helical" evidence="2">
    <location>
        <begin position="327"/>
        <end position="347"/>
    </location>
</feature>
<feature type="transmembrane region" description="Helical" evidence="2">
    <location>
        <begin position="354"/>
        <end position="374"/>
    </location>
</feature>
<feature type="transmembrane region" description="Helical" evidence="2">
    <location>
        <begin position="396"/>
        <end position="416"/>
    </location>
</feature>
<feature type="transmembrane region" description="Helical" evidence="2">
    <location>
        <begin position="425"/>
        <end position="445"/>
    </location>
</feature>
<feature type="transmembrane region" description="Helical" evidence="2">
    <location>
        <begin position="547"/>
        <end position="567"/>
    </location>
</feature>
<feature type="transmembrane region" description="Helical" evidence="2">
    <location>
        <begin position="608"/>
        <end position="628"/>
    </location>
</feature>
<feature type="transmembrane region" description="Helical" evidence="2">
    <location>
        <begin position="723"/>
        <end position="743"/>
    </location>
</feature>
<accession>A4QJX9</accession>
<comment type="function">
    <text evidence="1">NDH shuttles electrons from NAD(P)H:plastoquinone, via FMN and iron-sulfur (Fe-S) centers, to quinones in the photosynthetic chain and possibly in a chloroplast respiratory chain. The immediate electron acceptor for the enzyme in this species is believed to be plastoquinone. Couples the redox reaction to proton translocation, and thus conserves the redox energy in a proton gradient (By similarity).</text>
</comment>
<comment type="catalytic activity">
    <reaction>
        <text>a plastoquinone + NADH + (n+1) H(+)(in) = a plastoquinol + NAD(+) + n H(+)(out)</text>
        <dbReference type="Rhea" id="RHEA:42608"/>
        <dbReference type="Rhea" id="RHEA-COMP:9561"/>
        <dbReference type="Rhea" id="RHEA-COMP:9562"/>
        <dbReference type="ChEBI" id="CHEBI:15378"/>
        <dbReference type="ChEBI" id="CHEBI:17757"/>
        <dbReference type="ChEBI" id="CHEBI:57540"/>
        <dbReference type="ChEBI" id="CHEBI:57945"/>
        <dbReference type="ChEBI" id="CHEBI:62192"/>
    </reaction>
</comment>
<comment type="catalytic activity">
    <reaction>
        <text>a plastoquinone + NADPH + (n+1) H(+)(in) = a plastoquinol + NADP(+) + n H(+)(out)</text>
        <dbReference type="Rhea" id="RHEA:42612"/>
        <dbReference type="Rhea" id="RHEA-COMP:9561"/>
        <dbReference type="Rhea" id="RHEA-COMP:9562"/>
        <dbReference type="ChEBI" id="CHEBI:15378"/>
        <dbReference type="ChEBI" id="CHEBI:17757"/>
        <dbReference type="ChEBI" id="CHEBI:57783"/>
        <dbReference type="ChEBI" id="CHEBI:58349"/>
        <dbReference type="ChEBI" id="CHEBI:62192"/>
    </reaction>
</comment>
<comment type="subunit">
    <text evidence="1">NDH is composed of at least 16 different subunits, 5 of which are encoded in the nucleus.</text>
</comment>
<comment type="subcellular location">
    <subcellularLocation>
        <location evidence="1">Plastid</location>
        <location evidence="1">Chloroplast thylakoid membrane</location>
        <topology evidence="1">Multi-pass membrane protein</topology>
    </subcellularLocation>
</comment>
<comment type="similarity">
    <text evidence="3">Belongs to the complex I subunit 5 family.</text>
</comment>
<sequence>MEHTYQYSWIIPFIPLPVPILLGVGLLLFPTATKNLRRMWTFLSIFLLSIVMIFSLYLSIQQIFLSCIHQNVWSWTINNEFSFEFGYFIDPLTSIMSILITTVGILVLIYSDNYMSHDQGYLRFFAYMGFFNTSMLGLVTSSNLIQVYFFWELVGMCSYLLIGFWFTRPIAANACQKAFVTNRVGDFGLLLGILGLYWITGSFEFQDLFEIFKNLILNNRVNLLFLTLCAFLLFVGPIAKSAQFPLHVWLPDAMEGPTPISALIHAATMVAAGIFLVARLLPLFIVIPSIMYIISLIGIITVLLGATLALAQKDIKRGLAYSTMSQLGYMMLALGMGSYRSALFHLITHAYSKALLFLGSGSIIHSMEAIVGYSPDKSQNMILMGGLTKHVPITKTAFLIGTLSLCGIPPLACFWSKDEILNDSLLFSPIFAIIACSTAGLTAFYMFRIYLLTFEGHLNTFFLNYSGKKSSSFYSLSLWGKEEEKKLNKNFGLVPLLTMNNTKRASFFCNKTYKISNNVRNQIFITVENFGLNTKTFYYPHESDNTILFPMLILLLFTLFIGAIGIPFNQEGIDFDILSKLFTPSINLLHKNSQNFVDWYEFLRNATFSVSIAFFGIFIAYCLYKPFYSSLLNLTLLNSFQKMNSKRIRWEKLINFVYNWSYNRGYIDAFFKTSLIESIRRLAKQTNFFDKRIIDGITNGVGITSFFVGEVTKYIGGSRISSYLFLYLSYVLIFLMILLFFYFEKF</sequence>
<evidence type="ECO:0000250" key="1"/>
<evidence type="ECO:0000255" key="2"/>
<evidence type="ECO:0000305" key="3"/>
<reference key="1">
    <citation type="submission" date="2007-03" db="EMBL/GenBank/DDBJ databases">
        <title>Sequence analysis of Arabidopsis pumila JS2 chloroplast DNA.</title>
        <authorList>
            <person name="Hosouchi T."/>
            <person name="Tsuruoka H."/>
            <person name="Kotani H."/>
        </authorList>
    </citation>
    <scope>NUCLEOTIDE SEQUENCE [LARGE SCALE GENOMIC DNA]</scope>
</reference>
<name>NU5C_OLIPU</name>
<protein>
    <recommendedName>
        <fullName>NAD(P)H-quinone oxidoreductase subunit 5, chloroplastic</fullName>
        <ecNumber>7.1.1.-</ecNumber>
    </recommendedName>
    <alternativeName>
        <fullName>NAD(P)H dehydrogenase subunit 5</fullName>
    </alternativeName>
    <alternativeName>
        <fullName>NADH-plastoquinone oxidoreductase subunit 5</fullName>
    </alternativeName>
</protein>
<dbReference type="EC" id="7.1.1.-"/>
<dbReference type="EMBL" id="AP009368">
    <property type="protein sequence ID" value="BAF49987.1"/>
    <property type="molecule type" value="Genomic_DNA"/>
</dbReference>
<dbReference type="RefSeq" id="YP_001123162.1">
    <property type="nucleotide sequence ID" value="NC_009267.1"/>
</dbReference>
<dbReference type="SMR" id="A4QJX9"/>
<dbReference type="GeneID" id="4962391"/>
<dbReference type="GO" id="GO:0009535">
    <property type="term" value="C:chloroplast thylakoid membrane"/>
    <property type="evidence" value="ECO:0007669"/>
    <property type="project" value="UniProtKB-SubCell"/>
</dbReference>
<dbReference type="GO" id="GO:0008137">
    <property type="term" value="F:NADH dehydrogenase (ubiquinone) activity"/>
    <property type="evidence" value="ECO:0007669"/>
    <property type="project" value="InterPro"/>
</dbReference>
<dbReference type="GO" id="GO:0048038">
    <property type="term" value="F:quinone binding"/>
    <property type="evidence" value="ECO:0007669"/>
    <property type="project" value="UniProtKB-KW"/>
</dbReference>
<dbReference type="GO" id="GO:0042773">
    <property type="term" value="P:ATP synthesis coupled electron transport"/>
    <property type="evidence" value="ECO:0007669"/>
    <property type="project" value="InterPro"/>
</dbReference>
<dbReference type="GO" id="GO:0015990">
    <property type="term" value="P:electron transport coupled proton transport"/>
    <property type="evidence" value="ECO:0007669"/>
    <property type="project" value="TreeGrafter"/>
</dbReference>
<dbReference type="FunFam" id="1.20.5.2700:FF:000003">
    <property type="entry name" value="NAD(P)H-quinone oxidoreductase subunit 5, chloroplastic"/>
    <property type="match status" value="1"/>
</dbReference>
<dbReference type="Gene3D" id="1.20.5.2700">
    <property type="match status" value="1"/>
</dbReference>
<dbReference type="InterPro" id="IPR002128">
    <property type="entry name" value="NADH_UbQ_OxRdtase_chlpt_su5_C"/>
</dbReference>
<dbReference type="InterPro" id="IPR018393">
    <property type="entry name" value="NADHpl_OxRdtase_5_subgr"/>
</dbReference>
<dbReference type="InterPro" id="IPR001750">
    <property type="entry name" value="ND/Mrp_TM"/>
</dbReference>
<dbReference type="InterPro" id="IPR003945">
    <property type="entry name" value="NU5C-like"/>
</dbReference>
<dbReference type="InterPro" id="IPR001516">
    <property type="entry name" value="Proton_antipo_N"/>
</dbReference>
<dbReference type="NCBIfam" id="TIGR01974">
    <property type="entry name" value="NDH_I_L"/>
    <property type="match status" value="1"/>
</dbReference>
<dbReference type="NCBIfam" id="NF005141">
    <property type="entry name" value="PRK06590.1"/>
    <property type="match status" value="1"/>
</dbReference>
<dbReference type="PANTHER" id="PTHR42829">
    <property type="entry name" value="NADH-UBIQUINONE OXIDOREDUCTASE CHAIN 5"/>
    <property type="match status" value="1"/>
</dbReference>
<dbReference type="PANTHER" id="PTHR42829:SF2">
    <property type="entry name" value="NADH-UBIQUINONE OXIDOREDUCTASE CHAIN 5"/>
    <property type="match status" value="1"/>
</dbReference>
<dbReference type="Pfam" id="PF01010">
    <property type="entry name" value="Proton_antipo_C"/>
    <property type="match status" value="1"/>
</dbReference>
<dbReference type="Pfam" id="PF00361">
    <property type="entry name" value="Proton_antipo_M"/>
    <property type="match status" value="1"/>
</dbReference>
<dbReference type="Pfam" id="PF00662">
    <property type="entry name" value="Proton_antipo_N"/>
    <property type="match status" value="1"/>
</dbReference>
<dbReference type="PRINTS" id="PR01434">
    <property type="entry name" value="NADHDHGNASE5"/>
</dbReference>
<dbReference type="PRINTS" id="PR01435">
    <property type="entry name" value="NPOXDRDTASE5"/>
</dbReference>
<organism>
    <name type="scientific">Olimarabidopsis pumila</name>
    <name type="common">Dwarf rocket</name>
    <name type="synonym">Arabidopsis griffithiana</name>
    <dbReference type="NCBI Taxonomy" id="74718"/>
    <lineage>
        <taxon>Eukaryota</taxon>
        <taxon>Viridiplantae</taxon>
        <taxon>Streptophyta</taxon>
        <taxon>Embryophyta</taxon>
        <taxon>Tracheophyta</taxon>
        <taxon>Spermatophyta</taxon>
        <taxon>Magnoliopsida</taxon>
        <taxon>eudicotyledons</taxon>
        <taxon>Gunneridae</taxon>
        <taxon>Pentapetalae</taxon>
        <taxon>rosids</taxon>
        <taxon>malvids</taxon>
        <taxon>Brassicales</taxon>
        <taxon>Brassicaceae</taxon>
        <taxon>Alyssopsideae</taxon>
        <taxon>Olimarabidopsis</taxon>
    </lineage>
</organism>
<gene>
    <name type="primary">ndhF</name>
</gene>